<evidence type="ECO:0000255" key="1">
    <source>
        <dbReference type="HAMAP-Rule" id="MF_00451"/>
    </source>
</evidence>
<sequence>MAMERTFVAIKPDGVQRGLVGEILGRFERKGFKLVGLKQVTPSRDLAGEHYGVHRERPFFAGLVDFITSGPVIAMVWEGDGVIASARKLIGATKPLDAEPGTIRGDLAVNIGRNVIHGSDGPDTAQFEINLWFSAEELNAWTPSDQSWRIES</sequence>
<organism>
    <name type="scientific">Prochlorococcus marinus (strain MIT 9313)</name>
    <dbReference type="NCBI Taxonomy" id="74547"/>
    <lineage>
        <taxon>Bacteria</taxon>
        <taxon>Bacillati</taxon>
        <taxon>Cyanobacteriota</taxon>
        <taxon>Cyanophyceae</taxon>
        <taxon>Synechococcales</taxon>
        <taxon>Prochlorococcaceae</taxon>
        <taxon>Prochlorococcus</taxon>
    </lineage>
</organism>
<name>NDK_PROMM</name>
<comment type="function">
    <text evidence="1">Major role in the synthesis of nucleoside triphosphates other than ATP. The ATP gamma phosphate is transferred to the NDP beta phosphate via a ping-pong mechanism, using a phosphorylated active-site intermediate.</text>
</comment>
<comment type="catalytic activity">
    <reaction evidence="1">
        <text>a 2'-deoxyribonucleoside 5'-diphosphate + ATP = a 2'-deoxyribonucleoside 5'-triphosphate + ADP</text>
        <dbReference type="Rhea" id="RHEA:44640"/>
        <dbReference type="ChEBI" id="CHEBI:30616"/>
        <dbReference type="ChEBI" id="CHEBI:61560"/>
        <dbReference type="ChEBI" id="CHEBI:73316"/>
        <dbReference type="ChEBI" id="CHEBI:456216"/>
        <dbReference type="EC" id="2.7.4.6"/>
    </reaction>
</comment>
<comment type="catalytic activity">
    <reaction evidence="1">
        <text>a ribonucleoside 5'-diphosphate + ATP = a ribonucleoside 5'-triphosphate + ADP</text>
        <dbReference type="Rhea" id="RHEA:18113"/>
        <dbReference type="ChEBI" id="CHEBI:30616"/>
        <dbReference type="ChEBI" id="CHEBI:57930"/>
        <dbReference type="ChEBI" id="CHEBI:61557"/>
        <dbReference type="ChEBI" id="CHEBI:456216"/>
        <dbReference type="EC" id="2.7.4.6"/>
    </reaction>
</comment>
<comment type="cofactor">
    <cofactor evidence="1">
        <name>Mg(2+)</name>
        <dbReference type="ChEBI" id="CHEBI:18420"/>
    </cofactor>
</comment>
<comment type="subunit">
    <text evidence="1">Homotetramer.</text>
</comment>
<comment type="subcellular location">
    <subcellularLocation>
        <location evidence="1">Cytoplasm</location>
    </subcellularLocation>
</comment>
<comment type="similarity">
    <text evidence="1">Belongs to the NDK family.</text>
</comment>
<dbReference type="EC" id="2.7.4.6" evidence="1"/>
<dbReference type="EMBL" id="BX548175">
    <property type="protein sequence ID" value="CAE22322.1"/>
    <property type="molecule type" value="Genomic_DNA"/>
</dbReference>
<dbReference type="RefSeq" id="WP_011131512.1">
    <property type="nucleotide sequence ID" value="NC_005071.1"/>
</dbReference>
<dbReference type="SMR" id="Q7V425"/>
<dbReference type="KEGG" id="pmt:PMT_2148"/>
<dbReference type="eggNOG" id="COG0105">
    <property type="taxonomic scope" value="Bacteria"/>
</dbReference>
<dbReference type="HOGENOM" id="CLU_060216_6_3_3"/>
<dbReference type="OrthoDB" id="9801161at2"/>
<dbReference type="Proteomes" id="UP000001423">
    <property type="component" value="Chromosome"/>
</dbReference>
<dbReference type="GO" id="GO:0005737">
    <property type="term" value="C:cytoplasm"/>
    <property type="evidence" value="ECO:0007669"/>
    <property type="project" value="UniProtKB-SubCell"/>
</dbReference>
<dbReference type="GO" id="GO:0005524">
    <property type="term" value="F:ATP binding"/>
    <property type="evidence" value="ECO:0007669"/>
    <property type="project" value="UniProtKB-UniRule"/>
</dbReference>
<dbReference type="GO" id="GO:0046872">
    <property type="term" value="F:metal ion binding"/>
    <property type="evidence" value="ECO:0007669"/>
    <property type="project" value="UniProtKB-KW"/>
</dbReference>
<dbReference type="GO" id="GO:0004550">
    <property type="term" value="F:nucleoside diphosphate kinase activity"/>
    <property type="evidence" value="ECO:0007669"/>
    <property type="project" value="UniProtKB-UniRule"/>
</dbReference>
<dbReference type="GO" id="GO:0006241">
    <property type="term" value="P:CTP biosynthetic process"/>
    <property type="evidence" value="ECO:0007669"/>
    <property type="project" value="UniProtKB-UniRule"/>
</dbReference>
<dbReference type="GO" id="GO:0006183">
    <property type="term" value="P:GTP biosynthetic process"/>
    <property type="evidence" value="ECO:0007669"/>
    <property type="project" value="UniProtKB-UniRule"/>
</dbReference>
<dbReference type="GO" id="GO:0006228">
    <property type="term" value="P:UTP biosynthetic process"/>
    <property type="evidence" value="ECO:0007669"/>
    <property type="project" value="UniProtKB-UniRule"/>
</dbReference>
<dbReference type="CDD" id="cd04413">
    <property type="entry name" value="NDPk_I"/>
    <property type="match status" value="1"/>
</dbReference>
<dbReference type="FunFam" id="3.30.70.141:FF:000002">
    <property type="entry name" value="Nucleoside diphosphate kinase"/>
    <property type="match status" value="1"/>
</dbReference>
<dbReference type="Gene3D" id="3.30.70.141">
    <property type="entry name" value="Nucleoside diphosphate kinase-like domain"/>
    <property type="match status" value="1"/>
</dbReference>
<dbReference type="HAMAP" id="MF_00451">
    <property type="entry name" value="NDP_kinase"/>
    <property type="match status" value="1"/>
</dbReference>
<dbReference type="InterPro" id="IPR034907">
    <property type="entry name" value="NDK-like_dom"/>
</dbReference>
<dbReference type="InterPro" id="IPR036850">
    <property type="entry name" value="NDK-like_dom_sf"/>
</dbReference>
<dbReference type="InterPro" id="IPR001564">
    <property type="entry name" value="Nucleoside_diP_kinase"/>
</dbReference>
<dbReference type="InterPro" id="IPR023005">
    <property type="entry name" value="Nucleoside_diP_kinase_AS"/>
</dbReference>
<dbReference type="NCBIfam" id="NF001908">
    <property type="entry name" value="PRK00668.1"/>
    <property type="match status" value="1"/>
</dbReference>
<dbReference type="PANTHER" id="PTHR11349">
    <property type="entry name" value="NUCLEOSIDE DIPHOSPHATE KINASE"/>
    <property type="match status" value="1"/>
</dbReference>
<dbReference type="Pfam" id="PF00334">
    <property type="entry name" value="NDK"/>
    <property type="match status" value="1"/>
</dbReference>
<dbReference type="PRINTS" id="PR01243">
    <property type="entry name" value="NUCDPKINASE"/>
</dbReference>
<dbReference type="SMART" id="SM00562">
    <property type="entry name" value="NDK"/>
    <property type="match status" value="1"/>
</dbReference>
<dbReference type="SUPFAM" id="SSF54919">
    <property type="entry name" value="Nucleoside diphosphate kinase, NDK"/>
    <property type="match status" value="1"/>
</dbReference>
<dbReference type="PROSITE" id="PS00469">
    <property type="entry name" value="NDPK"/>
    <property type="match status" value="1"/>
</dbReference>
<dbReference type="PROSITE" id="PS51374">
    <property type="entry name" value="NDPK_LIKE"/>
    <property type="match status" value="1"/>
</dbReference>
<gene>
    <name evidence="1" type="primary">ndk</name>
    <name type="ordered locus">PMT_2148</name>
</gene>
<feature type="chain" id="PRO_0000137022" description="Nucleoside diphosphate kinase">
    <location>
        <begin position="1"/>
        <end position="152"/>
    </location>
</feature>
<feature type="active site" description="Pros-phosphohistidine intermediate" evidence="1">
    <location>
        <position position="117"/>
    </location>
</feature>
<feature type="binding site" evidence="1">
    <location>
        <position position="11"/>
    </location>
    <ligand>
        <name>ATP</name>
        <dbReference type="ChEBI" id="CHEBI:30616"/>
    </ligand>
</feature>
<feature type="binding site" evidence="1">
    <location>
        <position position="59"/>
    </location>
    <ligand>
        <name>ATP</name>
        <dbReference type="ChEBI" id="CHEBI:30616"/>
    </ligand>
</feature>
<feature type="binding site" evidence="1">
    <location>
        <position position="87"/>
    </location>
    <ligand>
        <name>ATP</name>
        <dbReference type="ChEBI" id="CHEBI:30616"/>
    </ligand>
</feature>
<feature type="binding site" evidence="1">
    <location>
        <position position="93"/>
    </location>
    <ligand>
        <name>ATP</name>
        <dbReference type="ChEBI" id="CHEBI:30616"/>
    </ligand>
</feature>
<feature type="binding site" evidence="1">
    <location>
        <position position="104"/>
    </location>
    <ligand>
        <name>ATP</name>
        <dbReference type="ChEBI" id="CHEBI:30616"/>
    </ligand>
</feature>
<feature type="binding site" evidence="1">
    <location>
        <position position="114"/>
    </location>
    <ligand>
        <name>ATP</name>
        <dbReference type="ChEBI" id="CHEBI:30616"/>
    </ligand>
</feature>
<accession>Q7V425</accession>
<reference key="1">
    <citation type="journal article" date="2003" name="Nature">
        <title>Genome divergence in two Prochlorococcus ecotypes reflects oceanic niche differentiation.</title>
        <authorList>
            <person name="Rocap G."/>
            <person name="Larimer F.W."/>
            <person name="Lamerdin J.E."/>
            <person name="Malfatti S."/>
            <person name="Chain P."/>
            <person name="Ahlgren N.A."/>
            <person name="Arellano A."/>
            <person name="Coleman M."/>
            <person name="Hauser L."/>
            <person name="Hess W.R."/>
            <person name="Johnson Z.I."/>
            <person name="Land M.L."/>
            <person name="Lindell D."/>
            <person name="Post A.F."/>
            <person name="Regala W."/>
            <person name="Shah M."/>
            <person name="Shaw S.L."/>
            <person name="Steglich C."/>
            <person name="Sullivan M.B."/>
            <person name="Ting C.S."/>
            <person name="Tolonen A."/>
            <person name="Webb E.A."/>
            <person name="Zinser E.R."/>
            <person name="Chisholm S.W."/>
        </authorList>
    </citation>
    <scope>NUCLEOTIDE SEQUENCE [LARGE SCALE GENOMIC DNA]</scope>
    <source>
        <strain>MIT 9313</strain>
    </source>
</reference>
<keyword id="KW-0067">ATP-binding</keyword>
<keyword id="KW-0963">Cytoplasm</keyword>
<keyword id="KW-0418">Kinase</keyword>
<keyword id="KW-0460">Magnesium</keyword>
<keyword id="KW-0479">Metal-binding</keyword>
<keyword id="KW-0546">Nucleotide metabolism</keyword>
<keyword id="KW-0547">Nucleotide-binding</keyword>
<keyword id="KW-0597">Phosphoprotein</keyword>
<keyword id="KW-1185">Reference proteome</keyword>
<keyword id="KW-0808">Transferase</keyword>
<proteinExistence type="inferred from homology"/>
<protein>
    <recommendedName>
        <fullName evidence="1">Nucleoside diphosphate kinase</fullName>
        <shortName evidence="1">NDK</shortName>
        <shortName evidence="1">NDP kinase</shortName>
        <ecNumber evidence="1">2.7.4.6</ecNumber>
    </recommendedName>
    <alternativeName>
        <fullName evidence="1">Nucleoside-2-P kinase</fullName>
    </alternativeName>
</protein>